<comment type="function">
    <text evidence="1">A non-essential component of RNA polymerase (RNAP).</text>
</comment>
<comment type="catalytic activity">
    <reaction evidence="1">
        <text>RNA(n) + a ribonucleoside 5'-triphosphate = RNA(n+1) + diphosphate</text>
        <dbReference type="Rhea" id="RHEA:21248"/>
        <dbReference type="Rhea" id="RHEA-COMP:14527"/>
        <dbReference type="Rhea" id="RHEA-COMP:17342"/>
        <dbReference type="ChEBI" id="CHEBI:33019"/>
        <dbReference type="ChEBI" id="CHEBI:61557"/>
        <dbReference type="ChEBI" id="CHEBI:140395"/>
        <dbReference type="EC" id="2.7.7.6"/>
    </reaction>
</comment>
<comment type="subunit">
    <text evidence="1">RNAP is composed of a core of 2 alpha, a beta and a beta' subunit. The core is associated with a delta subunit, and at least one of epsilon or omega. When a sigma factor is associated with the core the holoenzyme is formed, which can initiate transcription.</text>
</comment>
<comment type="similarity">
    <text evidence="1">Belongs to the RNA polymerase subunit epsilon family.</text>
</comment>
<gene>
    <name evidence="1" type="primary">rpoY</name>
    <name type="ordered locus">SPP_0191</name>
</gene>
<protein>
    <recommendedName>
        <fullName evidence="1">DNA-directed RNA polymerase subunit epsilon</fullName>
        <shortName evidence="1">RNAP epsilon subunit</shortName>
        <ecNumber evidence="1">2.7.7.6</ecNumber>
    </recommendedName>
    <alternativeName>
        <fullName evidence="1">RNA polymerase epsilon subunit</fullName>
    </alternativeName>
    <alternativeName>
        <fullName evidence="1">Transcriptase subunit epsilon</fullName>
    </alternativeName>
</protein>
<proteinExistence type="inferred from homology"/>
<dbReference type="EC" id="2.7.7.6" evidence="1"/>
<dbReference type="EMBL" id="CP000920">
    <property type="protein sequence ID" value="ACO21935.1"/>
    <property type="molecule type" value="Genomic_DNA"/>
</dbReference>
<dbReference type="RefSeq" id="WP_000639574.1">
    <property type="nucleotide sequence ID" value="NC_012467.1"/>
</dbReference>
<dbReference type="SMR" id="C1CI34"/>
<dbReference type="KEGG" id="spp:SPP_0191"/>
<dbReference type="HOGENOM" id="CLU_187518_0_0_9"/>
<dbReference type="GO" id="GO:0000428">
    <property type="term" value="C:DNA-directed RNA polymerase complex"/>
    <property type="evidence" value="ECO:0007669"/>
    <property type="project" value="UniProtKB-KW"/>
</dbReference>
<dbReference type="GO" id="GO:0003677">
    <property type="term" value="F:DNA binding"/>
    <property type="evidence" value="ECO:0007669"/>
    <property type="project" value="UniProtKB-UniRule"/>
</dbReference>
<dbReference type="GO" id="GO:0003899">
    <property type="term" value="F:DNA-directed RNA polymerase activity"/>
    <property type="evidence" value="ECO:0007669"/>
    <property type="project" value="UniProtKB-UniRule"/>
</dbReference>
<dbReference type="GO" id="GO:0006351">
    <property type="term" value="P:DNA-templated transcription"/>
    <property type="evidence" value="ECO:0007669"/>
    <property type="project" value="UniProtKB-UniRule"/>
</dbReference>
<dbReference type="Gene3D" id="3.10.20.730">
    <property type="entry name" value="RNAP, epsilon subunit-like"/>
    <property type="match status" value="1"/>
</dbReference>
<dbReference type="HAMAP" id="MF_01553">
    <property type="entry name" value="RNApol_bact_RpoY"/>
    <property type="match status" value="1"/>
</dbReference>
<dbReference type="InterPro" id="IPR009907">
    <property type="entry name" value="RpoY"/>
</dbReference>
<dbReference type="NCBIfam" id="NF010188">
    <property type="entry name" value="PRK13667.1"/>
    <property type="match status" value="1"/>
</dbReference>
<dbReference type="Pfam" id="PF07288">
    <property type="entry name" value="RpoY"/>
    <property type="match status" value="1"/>
</dbReference>
<feature type="chain" id="PRO_1000185341" description="DNA-directed RNA polymerase subunit epsilon">
    <location>
        <begin position="1"/>
        <end position="77"/>
    </location>
</feature>
<reference key="1">
    <citation type="journal article" date="2010" name="Genome Biol.">
        <title>Structure and dynamics of the pan-genome of Streptococcus pneumoniae and closely related species.</title>
        <authorList>
            <person name="Donati C."/>
            <person name="Hiller N.L."/>
            <person name="Tettelin H."/>
            <person name="Muzzi A."/>
            <person name="Croucher N.J."/>
            <person name="Angiuoli S.V."/>
            <person name="Oggioni M."/>
            <person name="Dunning Hotopp J.C."/>
            <person name="Hu F.Z."/>
            <person name="Riley D.R."/>
            <person name="Covacci A."/>
            <person name="Mitchell T.J."/>
            <person name="Bentley S.D."/>
            <person name="Kilian M."/>
            <person name="Ehrlich G.D."/>
            <person name="Rappuoli R."/>
            <person name="Moxon E.R."/>
            <person name="Masignani V."/>
        </authorList>
    </citation>
    <scope>NUCLEOTIDE SEQUENCE [LARGE SCALE GENOMIC DNA]</scope>
    <source>
        <strain>P1031</strain>
    </source>
</reference>
<organism>
    <name type="scientific">Streptococcus pneumoniae (strain P1031)</name>
    <dbReference type="NCBI Taxonomy" id="488223"/>
    <lineage>
        <taxon>Bacteria</taxon>
        <taxon>Bacillati</taxon>
        <taxon>Bacillota</taxon>
        <taxon>Bacilli</taxon>
        <taxon>Lactobacillales</taxon>
        <taxon>Streptococcaceae</taxon>
        <taxon>Streptococcus</taxon>
    </lineage>
</organism>
<keyword id="KW-0240">DNA-directed RNA polymerase</keyword>
<keyword id="KW-0548">Nucleotidyltransferase</keyword>
<keyword id="KW-0804">Transcription</keyword>
<keyword id="KW-0808">Transferase</keyword>
<name>RPOY_STRZP</name>
<evidence type="ECO:0000255" key="1">
    <source>
        <dbReference type="HAMAP-Rule" id="MF_01553"/>
    </source>
</evidence>
<sequence length="77" mass="9227">MIYKVFYQETKERSPRRETTRALYLDIDASSELEGRIAARQLVEENRPEYNIEYIELLSDKLLDYEKETGAFKITEF</sequence>
<accession>C1CI34</accession>